<feature type="chain" id="PRO_0000265813" description="ATP synthase epsilon chain">
    <location>
        <begin position="1"/>
        <end position="145"/>
    </location>
</feature>
<evidence type="ECO:0000255" key="1">
    <source>
        <dbReference type="HAMAP-Rule" id="MF_00530"/>
    </source>
</evidence>
<name>ATPE_FRATO</name>
<keyword id="KW-0066">ATP synthesis</keyword>
<keyword id="KW-0997">Cell inner membrane</keyword>
<keyword id="KW-1003">Cell membrane</keyword>
<keyword id="KW-0139">CF(1)</keyword>
<keyword id="KW-0375">Hydrogen ion transport</keyword>
<keyword id="KW-0406">Ion transport</keyword>
<keyword id="KW-0472">Membrane</keyword>
<keyword id="KW-0813">Transport</keyword>
<gene>
    <name evidence="1" type="primary">atpC</name>
    <name type="ordered locus">FTH_1731</name>
</gene>
<organism>
    <name type="scientific">Francisella tularensis subsp. holarctica (strain OSU18)</name>
    <dbReference type="NCBI Taxonomy" id="393011"/>
    <lineage>
        <taxon>Bacteria</taxon>
        <taxon>Pseudomonadati</taxon>
        <taxon>Pseudomonadota</taxon>
        <taxon>Gammaproteobacteria</taxon>
        <taxon>Thiotrichales</taxon>
        <taxon>Francisellaceae</taxon>
        <taxon>Francisella</taxon>
    </lineage>
</organism>
<reference key="1">
    <citation type="journal article" date="2006" name="J. Bacteriol.">
        <title>Chromosome rearrangement and diversification of Francisella tularensis revealed by the type B (OSU18) genome sequence.</title>
        <authorList>
            <person name="Petrosino J.F."/>
            <person name="Xiang Q."/>
            <person name="Karpathy S.E."/>
            <person name="Jiang H."/>
            <person name="Yerrapragada S."/>
            <person name="Liu Y."/>
            <person name="Gioia J."/>
            <person name="Hemphill L."/>
            <person name="Gonzalez A."/>
            <person name="Raghavan T.M."/>
            <person name="Uzman A."/>
            <person name="Fox G.E."/>
            <person name="Highlander S."/>
            <person name="Reichard M."/>
            <person name="Morton R.J."/>
            <person name="Clinkenbeard K.D."/>
            <person name="Weinstock G.M."/>
        </authorList>
    </citation>
    <scope>NUCLEOTIDE SEQUENCE [LARGE SCALE GENOMIC DNA]</scope>
    <source>
        <strain>OSU18</strain>
    </source>
</reference>
<accession>Q0BK85</accession>
<dbReference type="EMBL" id="CP000437">
    <property type="protein sequence ID" value="ABI83499.1"/>
    <property type="molecule type" value="Genomic_DNA"/>
</dbReference>
<dbReference type="RefSeq" id="WP_003017331.1">
    <property type="nucleotide sequence ID" value="NC_017463.1"/>
</dbReference>
<dbReference type="SMR" id="Q0BK85"/>
<dbReference type="KEGG" id="fth:FTH_1731"/>
<dbReference type="GO" id="GO:0005886">
    <property type="term" value="C:plasma membrane"/>
    <property type="evidence" value="ECO:0007669"/>
    <property type="project" value="UniProtKB-SubCell"/>
</dbReference>
<dbReference type="GO" id="GO:0045259">
    <property type="term" value="C:proton-transporting ATP synthase complex"/>
    <property type="evidence" value="ECO:0007669"/>
    <property type="project" value="UniProtKB-KW"/>
</dbReference>
<dbReference type="GO" id="GO:0005524">
    <property type="term" value="F:ATP binding"/>
    <property type="evidence" value="ECO:0007669"/>
    <property type="project" value="UniProtKB-UniRule"/>
</dbReference>
<dbReference type="GO" id="GO:0046933">
    <property type="term" value="F:proton-transporting ATP synthase activity, rotational mechanism"/>
    <property type="evidence" value="ECO:0007669"/>
    <property type="project" value="UniProtKB-UniRule"/>
</dbReference>
<dbReference type="CDD" id="cd12152">
    <property type="entry name" value="F1-ATPase_delta"/>
    <property type="match status" value="1"/>
</dbReference>
<dbReference type="Gene3D" id="2.60.15.10">
    <property type="entry name" value="F0F1 ATP synthase delta/epsilon subunit, N-terminal"/>
    <property type="match status" value="1"/>
</dbReference>
<dbReference type="HAMAP" id="MF_00530">
    <property type="entry name" value="ATP_synth_epsil_bac"/>
    <property type="match status" value="1"/>
</dbReference>
<dbReference type="InterPro" id="IPR001469">
    <property type="entry name" value="ATP_synth_F1_dsu/esu"/>
</dbReference>
<dbReference type="InterPro" id="IPR020546">
    <property type="entry name" value="ATP_synth_F1_dsu/esu_N"/>
</dbReference>
<dbReference type="InterPro" id="IPR036771">
    <property type="entry name" value="ATPsynth_dsu/esu_N"/>
</dbReference>
<dbReference type="NCBIfam" id="TIGR01216">
    <property type="entry name" value="ATP_synt_epsi"/>
    <property type="match status" value="1"/>
</dbReference>
<dbReference type="NCBIfam" id="NF009986">
    <property type="entry name" value="PRK13452.1"/>
    <property type="match status" value="1"/>
</dbReference>
<dbReference type="PANTHER" id="PTHR13822">
    <property type="entry name" value="ATP SYNTHASE DELTA/EPSILON CHAIN"/>
    <property type="match status" value="1"/>
</dbReference>
<dbReference type="PANTHER" id="PTHR13822:SF10">
    <property type="entry name" value="ATP SYNTHASE EPSILON CHAIN, CHLOROPLASTIC"/>
    <property type="match status" value="1"/>
</dbReference>
<dbReference type="Pfam" id="PF02823">
    <property type="entry name" value="ATP-synt_DE_N"/>
    <property type="match status" value="1"/>
</dbReference>
<dbReference type="SUPFAM" id="SSF51344">
    <property type="entry name" value="Epsilon subunit of F1F0-ATP synthase N-terminal domain"/>
    <property type="match status" value="1"/>
</dbReference>
<protein>
    <recommendedName>
        <fullName evidence="1">ATP synthase epsilon chain</fullName>
    </recommendedName>
    <alternativeName>
        <fullName evidence="1">ATP synthase F1 sector epsilon subunit</fullName>
    </alternativeName>
    <alternativeName>
        <fullName evidence="1">F-ATPase epsilon subunit</fullName>
    </alternativeName>
</protein>
<sequence>MTKKYLKVDVVSPLGSVFKGEADMVSLRGSAGEMGIVYGHTELLSTLPAGVVNVRKGQHTDVLYVSGGIVEVTPTRVTIMVDDMERAENLNQAEAEKARARAKEVLKNPDASKLDIEAANKRLKEADARLKALNSSNGLYYSKDD</sequence>
<proteinExistence type="inferred from homology"/>
<comment type="function">
    <text evidence="1">Produces ATP from ADP in the presence of a proton gradient across the membrane.</text>
</comment>
<comment type="subunit">
    <text>F-type ATPases have 2 components, CF(1) - the catalytic core - and CF(0) - the membrane proton channel. CF(1) has five subunits: alpha(3), beta(3), gamma(1), delta(1), epsilon(1). CF(0) has three main subunits: a, b and c.</text>
</comment>
<comment type="subcellular location">
    <subcellularLocation>
        <location evidence="1">Cell inner membrane</location>
        <topology evidence="1">Peripheral membrane protein</topology>
    </subcellularLocation>
</comment>
<comment type="similarity">
    <text evidence="1">Belongs to the ATPase epsilon chain family.</text>
</comment>